<comment type="function">
    <text evidence="1">Transcription factor which plays a key role in the Hippo signaling pathway, a pathway involved in organ size control and tumor suppression by restricting proliferation and promoting apoptosis. The core of this pathway is composed of a kinase cascade wherein MST1/MST2, in complex with its regulatory protein SAV1, phosphorylates and activates LATS1/2 in complex with its regulatory protein MOB1, which in turn phosphorylates and inactivates YAP1 oncoprotein and WWTR1/TAZ. Acts by mediating gene expression of YAP1 and WWTR1/TAZ, thereby regulating cell proliferation, migration and epithelial mesenchymal transition (EMT) induction. Binds specifically and non-cooperatively to the Sph and GT-IIC 'enhansons' (5'-GTGGAATGT-3') and activates transcription. Binds to the M-CAT motif (By similarity). Might play a role in the embryonic development of skeletal muscle.</text>
</comment>
<comment type="subunit">
    <text evidence="1 5">Interacts with WWTR1/TAZ (By similarity). Interacts with YAP1.</text>
</comment>
<comment type="interaction">
    <interactant intactId="EBI-9253444">
        <id>Q62296</id>
    </interactant>
    <interactant intactId="EBI-9253433">
        <id>Q80V24</id>
        <label>Vgll4</label>
    </interactant>
    <organismsDiffer>false</organismsDiffer>
    <experiments>3</experiments>
</comment>
<comment type="interaction">
    <interactant intactId="EBI-15985676">
        <id>Q62296-1</id>
    </interactant>
    <interactant intactId="EBI-15985690">
        <id>Q99NC0</id>
        <label>Vgll1</label>
    </interactant>
    <organismsDiffer>false</organismsDiffer>
    <experiments>4</experiments>
</comment>
<comment type="subcellular location">
    <subcellularLocation>
        <location>Nucleus</location>
    </subcellularLocation>
</comment>
<comment type="alternative products">
    <event type="alternative splicing"/>
    <isoform>
        <id>Q62296-1</id>
        <name>Long</name>
        <name>TEFR1A</name>
        <name>ETFR-2A</name>
        <sequence type="displayed"/>
    </isoform>
    <isoform>
        <id>Q62296-2</id>
        <name>Short</name>
        <name>TEFR1B</name>
        <name>ETFR-2B</name>
        <sequence type="described" ref="VSP_006390"/>
    </isoform>
</comment>
<comment type="tissue specificity">
    <text>Preferentially expressed in lung and in skeletal muscle.</text>
</comment>
<comment type="induction">
    <text>By FGF-1, FGF-2, calf serum, platelet-derived growth factor-BB, and phorbol 12-myristate 13-acetate.</text>
</comment>
<comment type="sequence caution" evidence="10">
    <conflict type="erroneous initiation">
        <sequence resource="EMBL-CDS" id="AAB12488"/>
    </conflict>
    <text>Extended N-terminus.</text>
</comment>
<comment type="sequence caution" evidence="10">
    <conflict type="miscellaneous discrepancy">
        <sequence resource="EMBL-CDS" id="AAB12488"/>
    </conflict>
    <text>Unusual initiator. The initiator methionine is coded by a non-canonical ATA isoleucine codon.</text>
</comment>
<dbReference type="EMBL" id="X94441">
    <property type="protein sequence ID" value="CAA64215.2"/>
    <property type="molecule type" value="mRNA"/>
</dbReference>
<dbReference type="EMBL" id="D87966">
    <property type="protein sequence ID" value="BAA13519.1"/>
    <property type="molecule type" value="mRNA"/>
</dbReference>
<dbReference type="EMBL" id="D87965">
    <property type="protein sequence ID" value="BAA13518.1"/>
    <property type="molecule type" value="mRNA"/>
</dbReference>
<dbReference type="EMBL" id="L26343">
    <property type="protein sequence ID" value="AAB12488.1"/>
    <property type="status" value="ALT_SEQ"/>
    <property type="molecule type" value="mRNA"/>
</dbReference>
<dbReference type="EMBL" id="L26344">
    <property type="protein sequence ID" value="AAC37680.1"/>
    <property type="molecule type" value="mRNA"/>
</dbReference>
<dbReference type="EMBL" id="BC130257">
    <property type="protein sequence ID" value="AAI30258.1"/>
    <property type="molecule type" value="mRNA"/>
</dbReference>
<dbReference type="EMBL" id="U51743">
    <property type="protein sequence ID" value="AAC52646.1"/>
    <property type="molecule type" value="mRNA"/>
</dbReference>
<dbReference type="EMBL" id="U51745">
    <property type="protein sequence ID" value="AAC52647.1"/>
    <property type="molecule type" value="mRNA"/>
</dbReference>
<dbReference type="CCDS" id="CCDS39645.1">
    <molecule id="Q62296-2"/>
</dbReference>
<dbReference type="CCDS" id="CCDS39646.1">
    <molecule id="Q62296-1"/>
</dbReference>
<dbReference type="PIR" id="JC5254">
    <property type="entry name" value="JC5254"/>
</dbReference>
<dbReference type="PIR" id="JC5255">
    <property type="entry name" value="JC5255"/>
</dbReference>
<dbReference type="RefSeq" id="NP_001074448.2">
    <molecule id="Q62296-2"/>
    <property type="nucleotide sequence ID" value="NM_001080979.1"/>
</dbReference>
<dbReference type="RefSeq" id="NP_035697.3">
    <molecule id="Q62296-1"/>
    <property type="nucleotide sequence ID" value="NM_011567.2"/>
</dbReference>
<dbReference type="PDB" id="3JUA">
    <property type="method" value="X-ray"/>
    <property type="resolution" value="3.00 A"/>
    <property type="chains" value="A/C/E/G=210-427"/>
</dbReference>
<dbReference type="PDB" id="4LN0">
    <property type="method" value="X-ray"/>
    <property type="resolution" value="2.90 A"/>
    <property type="chains" value="A/B=209-427"/>
</dbReference>
<dbReference type="PDB" id="5GN0">
    <property type="method" value="X-ray"/>
    <property type="resolution" value="2.90 A"/>
    <property type="chains" value="A/B/C/D=210-427"/>
</dbReference>
<dbReference type="PDB" id="5XJD">
    <property type="method" value="X-ray"/>
    <property type="resolution" value="2.22 A"/>
    <property type="chains" value="A/B=210-427"/>
</dbReference>
<dbReference type="PDB" id="5Z2Q">
    <property type="method" value="X-ray"/>
    <property type="resolution" value="2.74 A"/>
    <property type="chains" value="A/B=210-427"/>
</dbReference>
<dbReference type="PDB" id="6L9F">
    <property type="method" value="X-ray"/>
    <property type="resolution" value="2.56 A"/>
    <property type="chains" value="A/B=209-427"/>
</dbReference>
<dbReference type="PDB" id="6SBA">
    <property type="method" value="X-ray"/>
    <property type="resolution" value="1.30 A"/>
    <property type="chains" value="A=209-427"/>
</dbReference>
<dbReference type="PDBsum" id="3JUA"/>
<dbReference type="PDBsum" id="4LN0"/>
<dbReference type="PDBsum" id="5GN0"/>
<dbReference type="PDBsum" id="5XJD"/>
<dbReference type="PDBsum" id="5Z2Q"/>
<dbReference type="PDBsum" id="6L9F"/>
<dbReference type="PDBsum" id="6SBA"/>
<dbReference type="SMR" id="Q62296"/>
<dbReference type="BioGRID" id="204101">
    <property type="interactions" value="5"/>
</dbReference>
<dbReference type="CORUM" id="Q62296"/>
<dbReference type="DIP" id="DIP-59847N"/>
<dbReference type="FunCoup" id="Q62296">
    <property type="interactions" value="1020"/>
</dbReference>
<dbReference type="IntAct" id="Q62296">
    <property type="interactions" value="5"/>
</dbReference>
<dbReference type="STRING" id="10090.ENSMUSP00000006311"/>
<dbReference type="ChEMBL" id="CHEMBL4680035"/>
<dbReference type="GlyGen" id="Q62296">
    <property type="glycosylation" value="1 site"/>
</dbReference>
<dbReference type="PhosphoSitePlus" id="Q62296"/>
<dbReference type="SwissPalm" id="Q62296"/>
<dbReference type="PaxDb" id="10090-ENSMUSP00000006311"/>
<dbReference type="PeptideAtlas" id="Q62296"/>
<dbReference type="ProteomicsDB" id="262851">
    <molecule id="Q62296-1"/>
</dbReference>
<dbReference type="ProteomicsDB" id="262852">
    <molecule id="Q62296-2"/>
</dbReference>
<dbReference type="Antibodypedia" id="22199">
    <property type="antibodies" value="284 antibodies from 30 providers"/>
</dbReference>
<dbReference type="DNASU" id="21679"/>
<dbReference type="Ensembl" id="ENSMUST00000006311.13">
    <molecule id="Q62296-1"/>
    <property type="protein sequence ID" value="ENSMUSP00000006311.7"/>
    <property type="gene ID" value="ENSMUSG00000030353.16"/>
</dbReference>
<dbReference type="Ensembl" id="ENSMUST00000112157.4">
    <molecule id="Q62296-2"/>
    <property type="protein sequence ID" value="ENSMUSP00000107784.3"/>
    <property type="gene ID" value="ENSMUSG00000030353.16"/>
</dbReference>
<dbReference type="Ensembl" id="ENSMUST00000130454.8">
    <molecule id="Q62296-2"/>
    <property type="protein sequence ID" value="ENSMUSP00000118083.2"/>
    <property type="gene ID" value="ENSMUSG00000030353.16"/>
</dbReference>
<dbReference type="GeneID" id="21679"/>
<dbReference type="KEGG" id="mmu:21679"/>
<dbReference type="UCSC" id="uc009ede.1">
    <molecule id="Q62296-1"/>
    <property type="organism name" value="mouse"/>
</dbReference>
<dbReference type="UCSC" id="uc009edf.2">
    <molecule id="Q62296-2"/>
    <property type="organism name" value="mouse"/>
</dbReference>
<dbReference type="AGR" id="MGI:106907"/>
<dbReference type="CTD" id="7004"/>
<dbReference type="MGI" id="MGI:106907">
    <property type="gene designation" value="Tead4"/>
</dbReference>
<dbReference type="eggNOG" id="KOG3841">
    <property type="taxonomic scope" value="Eukaryota"/>
</dbReference>
<dbReference type="GeneTree" id="ENSGT00950000182956"/>
<dbReference type="InParanoid" id="Q62296"/>
<dbReference type="OMA" id="TAFHRKV"/>
<dbReference type="OrthoDB" id="10006572at2759"/>
<dbReference type="PhylomeDB" id="Q62296"/>
<dbReference type="TreeFam" id="TF313443"/>
<dbReference type="Reactome" id="R-MMU-2032785">
    <property type="pathway name" value="YAP1- and WWTR1 (TAZ)-stimulated gene expression"/>
</dbReference>
<dbReference type="Reactome" id="R-MMU-8951671">
    <property type="pathway name" value="RUNX3 regulates YAP1-mediated transcription"/>
</dbReference>
<dbReference type="BioGRID-ORCS" id="21679">
    <property type="hits" value="3 hits in 82 CRISPR screens"/>
</dbReference>
<dbReference type="ChiTaRS" id="Tead4">
    <property type="organism name" value="mouse"/>
</dbReference>
<dbReference type="EvolutionaryTrace" id="Q62296"/>
<dbReference type="PRO" id="PR:Q62296"/>
<dbReference type="Proteomes" id="UP000000589">
    <property type="component" value="Chromosome 6"/>
</dbReference>
<dbReference type="RNAct" id="Q62296">
    <property type="molecule type" value="protein"/>
</dbReference>
<dbReference type="Bgee" id="ENSMUSG00000030353">
    <property type="expression patterns" value="Expressed in ectoplacental cone and 121 other cell types or tissues"/>
</dbReference>
<dbReference type="ExpressionAtlas" id="Q62296">
    <property type="expression patterns" value="baseline and differential"/>
</dbReference>
<dbReference type="GO" id="GO:0005737">
    <property type="term" value="C:cytoplasm"/>
    <property type="evidence" value="ECO:0000314"/>
    <property type="project" value="MGI"/>
</dbReference>
<dbReference type="GO" id="GO:0005654">
    <property type="term" value="C:nucleoplasm"/>
    <property type="evidence" value="ECO:0000304"/>
    <property type="project" value="Reactome"/>
</dbReference>
<dbReference type="GO" id="GO:0032993">
    <property type="term" value="C:protein-DNA complex"/>
    <property type="evidence" value="ECO:0000314"/>
    <property type="project" value="MGI"/>
</dbReference>
<dbReference type="GO" id="GO:0005667">
    <property type="term" value="C:transcription regulator complex"/>
    <property type="evidence" value="ECO:0000314"/>
    <property type="project" value="MGI"/>
</dbReference>
<dbReference type="GO" id="GO:0003677">
    <property type="term" value="F:DNA binding"/>
    <property type="evidence" value="ECO:0000314"/>
    <property type="project" value="MGI"/>
</dbReference>
<dbReference type="GO" id="GO:0001228">
    <property type="term" value="F:DNA-binding transcription activator activity, RNA polymerase II-specific"/>
    <property type="evidence" value="ECO:0000314"/>
    <property type="project" value="NTNU_SB"/>
</dbReference>
<dbReference type="GO" id="GO:0003700">
    <property type="term" value="F:DNA-binding transcription factor activity"/>
    <property type="evidence" value="ECO:0000314"/>
    <property type="project" value="MGI"/>
</dbReference>
<dbReference type="GO" id="GO:0000978">
    <property type="term" value="F:RNA polymerase II cis-regulatory region sequence-specific DNA binding"/>
    <property type="evidence" value="ECO:0000314"/>
    <property type="project" value="NTNU_SB"/>
</dbReference>
<dbReference type="GO" id="GO:0043565">
    <property type="term" value="F:sequence-specific DNA binding"/>
    <property type="evidence" value="ECO:0000314"/>
    <property type="project" value="MGI"/>
</dbReference>
<dbReference type="GO" id="GO:0001825">
    <property type="term" value="P:blastocyst formation"/>
    <property type="evidence" value="ECO:0000315"/>
    <property type="project" value="MGI"/>
</dbReference>
<dbReference type="GO" id="GO:0045165">
    <property type="term" value="P:cell fate commitment"/>
    <property type="evidence" value="ECO:0000314"/>
    <property type="project" value="MGI"/>
</dbReference>
<dbReference type="GO" id="GO:0001708">
    <property type="term" value="P:cell fate specification"/>
    <property type="evidence" value="ECO:0000315"/>
    <property type="project" value="MGI"/>
</dbReference>
<dbReference type="GO" id="GO:0006351">
    <property type="term" value="P:DNA-templated transcription"/>
    <property type="evidence" value="ECO:0007669"/>
    <property type="project" value="InterPro"/>
</dbReference>
<dbReference type="GO" id="GO:0007566">
    <property type="term" value="P:embryo implantation"/>
    <property type="evidence" value="ECO:0000315"/>
    <property type="project" value="MGI"/>
</dbReference>
<dbReference type="GO" id="GO:0035329">
    <property type="term" value="P:hippo signaling"/>
    <property type="evidence" value="ECO:0007669"/>
    <property type="project" value="Ensembl"/>
</dbReference>
<dbReference type="GO" id="GO:0001701">
    <property type="term" value="P:in utero embryonic development"/>
    <property type="evidence" value="ECO:0000315"/>
    <property type="project" value="MGI"/>
</dbReference>
<dbReference type="GO" id="GO:0045893">
    <property type="term" value="P:positive regulation of DNA-templated transcription"/>
    <property type="evidence" value="ECO:0000314"/>
    <property type="project" value="MGI"/>
</dbReference>
<dbReference type="GO" id="GO:1902459">
    <property type="term" value="P:positive regulation of stem cell population maintenance"/>
    <property type="evidence" value="ECO:0000316"/>
    <property type="project" value="MGI"/>
</dbReference>
<dbReference type="GO" id="GO:0045944">
    <property type="term" value="P:positive regulation of transcription by RNA polymerase II"/>
    <property type="evidence" value="ECO:0000314"/>
    <property type="project" value="NTNU_SB"/>
</dbReference>
<dbReference type="GO" id="GO:0006357">
    <property type="term" value="P:regulation of transcription by RNA polymerase II"/>
    <property type="evidence" value="ECO:0000315"/>
    <property type="project" value="MGI"/>
</dbReference>
<dbReference type="GO" id="GO:0001830">
    <property type="term" value="P:trophectodermal cell fate commitment"/>
    <property type="evidence" value="ECO:0000315"/>
    <property type="project" value="MGI"/>
</dbReference>
<dbReference type="FunFam" id="2.70.50.80:FF:000001">
    <property type="entry name" value="Transcriptional enhancer factor TEF-1, putative"/>
    <property type="match status" value="1"/>
</dbReference>
<dbReference type="Gene3D" id="2.70.50.80">
    <property type="match status" value="1"/>
</dbReference>
<dbReference type="Gene3D" id="6.10.20.40">
    <property type="entry name" value="TEA/ATTS domain"/>
    <property type="match status" value="1"/>
</dbReference>
<dbReference type="IDEAL" id="IID50291"/>
<dbReference type="InterPro" id="IPR000818">
    <property type="entry name" value="TEA/ATTS_dom"/>
</dbReference>
<dbReference type="InterPro" id="IPR038096">
    <property type="entry name" value="TEA/ATTS_sf"/>
</dbReference>
<dbReference type="InterPro" id="IPR050937">
    <property type="entry name" value="TEC1_TEAD_TF"/>
</dbReference>
<dbReference type="InterPro" id="IPR027255">
    <property type="entry name" value="TEF-3"/>
</dbReference>
<dbReference type="InterPro" id="IPR016361">
    <property type="entry name" value="TEF_metazoa"/>
</dbReference>
<dbReference type="InterPro" id="IPR041086">
    <property type="entry name" value="YBD"/>
</dbReference>
<dbReference type="PANTHER" id="PTHR11834">
    <property type="entry name" value="TRANSCRIPTIONAL ENHANCER FACTOR TEF RELATED"/>
    <property type="match status" value="1"/>
</dbReference>
<dbReference type="PANTHER" id="PTHR11834:SF2">
    <property type="entry name" value="TRANSCRIPTIONAL ENHANCER FACTOR TEF-3"/>
    <property type="match status" value="1"/>
</dbReference>
<dbReference type="Pfam" id="PF01285">
    <property type="entry name" value="TEA"/>
    <property type="match status" value="1"/>
</dbReference>
<dbReference type="Pfam" id="PF17725">
    <property type="entry name" value="YBD"/>
    <property type="match status" value="1"/>
</dbReference>
<dbReference type="PIRSF" id="PIRSF002603">
    <property type="entry name" value="TEF"/>
    <property type="match status" value="1"/>
</dbReference>
<dbReference type="PIRSF" id="PIRSF500722">
    <property type="entry name" value="TEF-3"/>
    <property type="match status" value="1"/>
</dbReference>
<dbReference type="PRINTS" id="PR00065">
    <property type="entry name" value="TEADOMAIN"/>
</dbReference>
<dbReference type="SMART" id="SM00426">
    <property type="entry name" value="TEA"/>
    <property type="match status" value="1"/>
</dbReference>
<dbReference type="PROSITE" id="PS00554">
    <property type="entry name" value="TEA_1"/>
    <property type="match status" value="1"/>
</dbReference>
<dbReference type="PROSITE" id="PS51088">
    <property type="entry name" value="TEA_2"/>
    <property type="match status" value="1"/>
</dbReference>
<protein>
    <recommendedName>
        <fullName>Transcriptional enhancer factor TEF-3</fullName>
    </recommendedName>
    <alternativeName>
        <fullName>ETF-related factor 2</fullName>
        <shortName>ETFR-2</shortName>
    </alternativeName>
    <alternativeName>
        <fullName>TEA domain family member 4</fullName>
        <shortName>TEAD-4</shortName>
    </alternativeName>
    <alternativeName>
        <fullName>TEF-1-related factor 1</fullName>
    </alternativeName>
    <alternativeName>
        <fullName>TEF-1-related factor FR-19</fullName>
        <shortName>RTEF-1</shortName>
    </alternativeName>
</protein>
<sequence>MTSNEWSSPDSPEGSSISGGSQALDKPIDNDAEGVWSPEIERSFQEALAIYPPCGRRKIILTEEGKMYGRNELIARHIKLRTGKTRTRKQVSSHIQVLARRKAREIQAKLKDQAAKNKALQSMAAMSSAQIVSATAFHSKMALARGPGYPAISGFWQGALPGQPGTSHDVKPFSQNTYPVQPPLPLPGFESPAGPTPSPSAPLAPPWQGRSIASSKLWMLEFSAFLERQQDPDTYNKHLFVHISQSSPSYSDPYLETVDIRQIYDKFPEKKGGLKELFERGPSNAFFLVKFWADLNTNIDDEGSAFYGVSSQYESPENMIITCSTKVCSFGKQVVEKVETEYARYENGHYLYRIHRSPLCEYMINFIHKLKHLPEKYMMNSVLENFTILQVVTNRDTQETLLCIAYVFEVSASEHGAQHHIYRLVKE</sequence>
<feature type="chain" id="PRO_0000205938" description="Transcriptional enhancer factor TEF-3">
    <location>
        <begin position="1"/>
        <end position="427"/>
    </location>
</feature>
<feature type="DNA-binding region" description="TEA" evidence="3">
    <location>
        <begin position="29"/>
        <end position="105"/>
    </location>
</feature>
<feature type="region of interest" description="Disordered" evidence="4">
    <location>
        <begin position="1"/>
        <end position="32"/>
    </location>
</feature>
<feature type="region of interest" description="Disordered" evidence="4">
    <location>
        <begin position="163"/>
        <end position="206"/>
    </location>
</feature>
<feature type="short sequence motif" description="Nuclear localization signal" evidence="2">
    <location>
        <begin position="78"/>
        <end position="94"/>
    </location>
</feature>
<feature type="compositionally biased region" description="Low complexity" evidence="4">
    <location>
        <begin position="7"/>
        <end position="21"/>
    </location>
</feature>
<feature type="compositionally biased region" description="Pro residues" evidence="4">
    <location>
        <begin position="194"/>
        <end position="205"/>
    </location>
</feature>
<feature type="splice variant" id="VSP_006390" description="In isoform Short." evidence="6 7 8 9">
    <location>
        <begin position="112"/>
        <end position="154"/>
    </location>
</feature>
<feature type="sequence conflict" description="In Ref. 3; AAB12488." evidence="10" ref="3">
    <original>A</original>
    <variation>L</variation>
    <location>
        <position position="142"/>
    </location>
</feature>
<feature type="strand" evidence="13">
    <location>
        <begin position="211"/>
        <end position="213"/>
    </location>
</feature>
<feature type="strand" evidence="15">
    <location>
        <begin position="218"/>
        <end position="228"/>
    </location>
</feature>
<feature type="strand" evidence="12">
    <location>
        <begin position="231"/>
        <end position="233"/>
    </location>
</feature>
<feature type="strand" evidence="15">
    <location>
        <begin position="238"/>
        <end position="244"/>
    </location>
</feature>
<feature type="strand" evidence="11">
    <location>
        <begin position="250"/>
        <end position="252"/>
    </location>
</feature>
<feature type="strand" evidence="15">
    <location>
        <begin position="257"/>
        <end position="259"/>
    </location>
</feature>
<feature type="helix" evidence="15">
    <location>
        <begin position="260"/>
        <end position="262"/>
    </location>
</feature>
<feature type="helix" evidence="15">
    <location>
        <begin position="264"/>
        <end position="266"/>
    </location>
</feature>
<feature type="strand" evidence="14">
    <location>
        <begin position="270"/>
        <end position="272"/>
    </location>
</feature>
<feature type="helix" evidence="15">
    <location>
        <begin position="274"/>
        <end position="280"/>
    </location>
</feature>
<feature type="helix" evidence="15">
    <location>
        <begin position="283"/>
        <end position="285"/>
    </location>
</feature>
<feature type="strand" evidence="15">
    <location>
        <begin position="286"/>
        <end position="293"/>
    </location>
</feature>
<feature type="helix" evidence="15">
    <location>
        <begin position="299"/>
        <end position="302"/>
    </location>
</feature>
<feature type="strand" evidence="15">
    <location>
        <begin position="305"/>
        <end position="317"/>
    </location>
</feature>
<feature type="strand" evidence="15">
    <location>
        <begin position="320"/>
        <end position="329"/>
    </location>
</feature>
<feature type="strand" evidence="15">
    <location>
        <begin position="332"/>
        <end position="342"/>
    </location>
</feature>
<feature type="strand" evidence="15">
    <location>
        <begin position="344"/>
        <end position="346"/>
    </location>
</feature>
<feature type="strand" evidence="15">
    <location>
        <begin position="349"/>
        <end position="358"/>
    </location>
</feature>
<feature type="helix" evidence="15">
    <location>
        <begin position="362"/>
        <end position="371"/>
    </location>
</feature>
<feature type="strand" evidence="14">
    <location>
        <begin position="373"/>
        <end position="375"/>
    </location>
</feature>
<feature type="helix" evidence="15">
    <location>
        <begin position="376"/>
        <end position="384"/>
    </location>
</feature>
<feature type="strand" evidence="15">
    <location>
        <begin position="386"/>
        <end position="394"/>
    </location>
</feature>
<feature type="turn" evidence="15">
    <location>
        <begin position="395"/>
        <end position="397"/>
    </location>
</feature>
<feature type="strand" evidence="15">
    <location>
        <begin position="400"/>
        <end position="410"/>
    </location>
</feature>
<feature type="turn" evidence="12">
    <location>
        <begin position="413"/>
        <end position="415"/>
    </location>
</feature>
<feature type="strand" evidence="15">
    <location>
        <begin position="418"/>
        <end position="425"/>
    </location>
</feature>
<keyword id="KW-0002">3D-structure</keyword>
<keyword id="KW-0010">Activator</keyword>
<keyword id="KW-0025">Alternative splicing</keyword>
<keyword id="KW-0238">DNA-binding</keyword>
<keyword id="KW-0539">Nucleus</keyword>
<keyword id="KW-1185">Reference proteome</keyword>
<keyword id="KW-0804">Transcription</keyword>
<keyword id="KW-0805">Transcription regulation</keyword>
<name>TEAD4_MOUSE</name>
<organism>
    <name type="scientific">Mus musculus</name>
    <name type="common">Mouse</name>
    <dbReference type="NCBI Taxonomy" id="10090"/>
    <lineage>
        <taxon>Eukaryota</taxon>
        <taxon>Metazoa</taxon>
        <taxon>Chordata</taxon>
        <taxon>Craniata</taxon>
        <taxon>Vertebrata</taxon>
        <taxon>Euteleostomi</taxon>
        <taxon>Mammalia</taxon>
        <taxon>Eutheria</taxon>
        <taxon>Euarchontoglires</taxon>
        <taxon>Glires</taxon>
        <taxon>Rodentia</taxon>
        <taxon>Myomorpha</taxon>
        <taxon>Muroidea</taxon>
        <taxon>Muridae</taxon>
        <taxon>Murinae</taxon>
        <taxon>Mus</taxon>
        <taxon>Mus</taxon>
    </lineage>
</organism>
<gene>
    <name type="primary">Tead4</name>
    <name type="synonym">Tcf13r1</name>
    <name type="synonym">Tef3</name>
    <name type="synonym">Tefr1</name>
</gene>
<reference key="1">
    <citation type="journal article" date="1996" name="J. Biol. Chem.">
        <title>A novel family of developmentally regulated mammalian transcription factors containing the TEA/ATTS DNA binding domain.</title>
        <authorList>
            <person name="Jacquemin P."/>
            <person name="Hwang J.-J."/>
            <person name="Martial J.A."/>
            <person name="Dolle P."/>
            <person name="Davidson I."/>
        </authorList>
    </citation>
    <scope>NUCLEOTIDE SEQUENCE [MRNA]</scope>
</reference>
<reference key="2">
    <citation type="journal article" date="1996" name="Biochem. Biophys. Res. Commun.">
        <title>A novel family of TEA domain-containing transcription factors with distinct spatiotemporal expression patterns.</title>
        <authorList>
            <person name="Yasunami M."/>
            <person name="Suzuki K."/>
            <person name="Ohkubo H."/>
        </authorList>
    </citation>
    <scope>NUCLEOTIDE SEQUENCE [MRNA] (ISOFORMS LONG AND SHORT)</scope>
</reference>
<reference key="3">
    <citation type="journal article" date="1996" name="J. Biol. Chem.">
        <title>cDNA cloning and characterization of murine transcriptional enhancer factor-1-related protein 1, a transcription factor that binds to the M-CAT motif.</title>
        <authorList>
            <person name="Yockey C.E."/>
            <person name="Smith G."/>
            <person name="Izumo S."/>
            <person name="Shimizu N."/>
        </authorList>
    </citation>
    <scope>NUCLEOTIDE SEQUENCE [MRNA] (ISOFORMS LONG AND SHORT)</scope>
    <source>
        <strain>C3H/HeJ</strain>
    </source>
</reference>
<reference key="4">
    <citation type="journal article" date="2004" name="Genome Res.">
        <title>The status, quality, and expansion of the NIH full-length cDNA project: the Mammalian Gene Collection (MGC).</title>
        <authorList>
            <consortium name="The MGC Project Team"/>
        </authorList>
    </citation>
    <scope>NUCLEOTIDE SEQUENCE [LARGE SCALE MRNA] (ISOFORM SHORT)</scope>
</reference>
<reference key="5">
    <citation type="journal article" date="1996" name="J. Biol. Chem.">
        <title>Identification of a murine TEF-1-related gene expressed after mitogenic stimulation of quiescent fibroblasts and during myogenic differentiation.</title>
        <authorList>
            <person name="Hsu D.K.W."/>
            <person name="Guo Y."/>
            <person name="Alberts G.F."/>
            <person name="Copeland N.G."/>
            <person name="Gilbert D.J."/>
            <person name="Jenkins N.A."/>
            <person name="Peifley K.A."/>
            <person name="Winkles J.A."/>
        </authorList>
    </citation>
    <scope>NUCLEOTIDE SEQUENCE [MRNA] OF 7-427 (ISOFORMS LONG AND SHORT)</scope>
    <source>
        <strain>BALB/cJ</strain>
    </source>
</reference>
<reference key="6">
    <citation type="journal article" date="2010" name="Genes Dev.">
        <title>Structural basis of YAP recognition by TEAD4 in the hippo pathway.</title>
        <authorList>
            <person name="Chen L."/>
            <person name="Chan S.W."/>
            <person name="Zhang X."/>
            <person name="Walsh M."/>
            <person name="Lim C.J."/>
            <person name="Hong W."/>
            <person name="Song H."/>
        </authorList>
    </citation>
    <scope>X-RAY CRYSTALLOGRAPHY (3.0 ANGSTROMS) OF 210-427 IN COMPLEX WITH YAP1</scope>
</reference>
<accession>Q62296</accession>
<accession>A2BDD5</accession>
<accession>P70282</accession>
<accession>Q61174</accession>
<accession>Q61175</accession>
<accession>Q62298</accession>
<proteinExistence type="evidence at protein level"/>
<evidence type="ECO:0000250" key="1"/>
<evidence type="ECO:0000255" key="2"/>
<evidence type="ECO:0000255" key="3">
    <source>
        <dbReference type="PROSITE-ProRule" id="PRU00505"/>
    </source>
</evidence>
<evidence type="ECO:0000256" key="4">
    <source>
        <dbReference type="SAM" id="MobiDB-lite"/>
    </source>
</evidence>
<evidence type="ECO:0000269" key="5">
    <source>
    </source>
</evidence>
<evidence type="ECO:0000303" key="6">
    <source>
    </source>
</evidence>
<evidence type="ECO:0000303" key="7">
    <source>
    </source>
</evidence>
<evidence type="ECO:0000303" key="8">
    <source>
    </source>
</evidence>
<evidence type="ECO:0000303" key="9">
    <source>
    </source>
</evidence>
<evidence type="ECO:0000305" key="10"/>
<evidence type="ECO:0007829" key="11">
    <source>
        <dbReference type="PDB" id="4LN0"/>
    </source>
</evidence>
<evidence type="ECO:0007829" key="12">
    <source>
        <dbReference type="PDB" id="5XJD"/>
    </source>
</evidence>
<evidence type="ECO:0007829" key="13">
    <source>
        <dbReference type="PDB" id="5Z2Q"/>
    </source>
</evidence>
<evidence type="ECO:0007829" key="14">
    <source>
        <dbReference type="PDB" id="6L9F"/>
    </source>
</evidence>
<evidence type="ECO:0007829" key="15">
    <source>
        <dbReference type="PDB" id="6SBA"/>
    </source>
</evidence>